<accession>F2QQ67</accession>
<keyword id="KW-0961">Cell wall biogenesis/degradation</keyword>
<keyword id="KW-0175">Coiled coil</keyword>
<keyword id="KW-0325">Glycoprotein</keyword>
<keyword id="KW-0328">Glycosyltransferase</keyword>
<keyword id="KW-0472">Membrane</keyword>
<keyword id="KW-0735">Signal-anchor</keyword>
<keyword id="KW-0808">Transferase</keyword>
<keyword id="KW-0812">Transmembrane</keyword>
<keyword id="KW-1133">Transmembrane helix</keyword>
<sequence>MRIRSNVLLLSTAGALALVWFAVVFSWDDKSIFGIPTPGHAVASAYDSSVTLGTFNDMEVDSYVTNIYDNAPVLGCYDLSYHGLLKVSPKHEILCDMKFIRARVLETEAYAALKDLEHKKLTEEEKIEKHWFTFYGSSVFLPDHDVHYLVRRVVFSGEGKANRPITSILVAQIYDKNWNELNGHFLNVLNPNTGKLQHHAFPQVLPIAVNWDRNSKYRGQEDPRVVLRRGRFGPDPLVMFNTLTQNNKLRRLFTISPFDQYKTVMYRTNAFKMQTTEKNWVPFFLKDDQESVHFVYSFNPLRVLNCSLDNGACDVLFELPHDFGMSSELRGATPMLNLPQAIPMADDKEIWVSFPRTRISDCGCSETMYRPMLMLFVREGTNFFAELLSSSIDFGLEVIPYTGDGLPCSSGQSVLIPNSIDNWEVTGSNGEDILSLTFSEADKSTSVVHIRGLYKYLSELDGYGGPEAEDEHNFQRILSDLHFDGKKTIENFKKVQSCALDAAKAYCKEYGVTRGEEDRLKNKEKERKIEEKRKKEEERKKKEEEKKKKEEEEKKKKEEEEEEEKRLKELKKKLKELQEELEKQKDEVKDTKAK</sequence>
<proteinExistence type="inferred from homology"/>
<protein>
    <recommendedName>
        <fullName>Beta-mannosyltransferase 3</fullName>
        <ecNumber>2.4.1.-</ecNumber>
    </recommendedName>
</protein>
<evidence type="ECO:0000250" key="1"/>
<evidence type="ECO:0000255" key="2"/>
<evidence type="ECO:0000256" key="3">
    <source>
        <dbReference type="SAM" id="MobiDB-lite"/>
    </source>
</evidence>
<evidence type="ECO:0000305" key="4"/>
<gene>
    <name type="primary">BMT3</name>
    <name type="ordered locus">PP7435_Chr1-1431</name>
</gene>
<name>BMT3_KOMPC</name>
<comment type="function">
    <text evidence="1">Beta-mannosyltransferase involved in cell wall biosynthesis.</text>
</comment>
<comment type="subcellular location">
    <subcellularLocation>
        <location evidence="4">Membrane</location>
        <topology evidence="4">Single-pass type II membrane protein</topology>
    </subcellularLocation>
</comment>
<comment type="similarity">
    <text evidence="4">Belongs to the BMT family.</text>
</comment>
<dbReference type="EC" id="2.4.1.-"/>
<dbReference type="EMBL" id="FR839628">
    <property type="protein sequence ID" value="CCA37545.1"/>
    <property type="molecule type" value="Genomic_DNA"/>
</dbReference>
<dbReference type="SMR" id="F2QQ67"/>
<dbReference type="CAZy" id="GT91">
    <property type="family name" value="Glycosyltransferase Family 91"/>
</dbReference>
<dbReference type="GlyCosmos" id="F2QQ67">
    <property type="glycosylation" value="1 site, No reported glycans"/>
</dbReference>
<dbReference type="HOGENOM" id="CLU_013841_3_0_1"/>
<dbReference type="Proteomes" id="UP000006853">
    <property type="component" value="Chromosome 1"/>
</dbReference>
<dbReference type="GO" id="GO:0016020">
    <property type="term" value="C:membrane"/>
    <property type="evidence" value="ECO:0007669"/>
    <property type="project" value="UniProtKB-SubCell"/>
</dbReference>
<dbReference type="GO" id="GO:0000030">
    <property type="term" value="F:mannosyltransferase activity"/>
    <property type="evidence" value="ECO:0007669"/>
    <property type="project" value="InterPro"/>
</dbReference>
<dbReference type="GO" id="GO:0071555">
    <property type="term" value="P:cell wall organization"/>
    <property type="evidence" value="ECO:0007669"/>
    <property type="project" value="UniProtKB-KW"/>
</dbReference>
<dbReference type="InterPro" id="IPR021988">
    <property type="entry name" value="BMT1"/>
</dbReference>
<dbReference type="Pfam" id="PF12141">
    <property type="entry name" value="BMT"/>
    <property type="match status" value="2"/>
</dbReference>
<feature type="chain" id="PRO_0000426103" description="Beta-mannosyltransferase 3">
    <location>
        <begin position="1"/>
        <end position="594"/>
    </location>
</feature>
<feature type="topological domain" description="Cytoplasmic" evidence="2">
    <location>
        <begin position="1"/>
        <end position="6"/>
    </location>
</feature>
<feature type="transmembrane region" description="Helical" evidence="2">
    <location>
        <begin position="7"/>
        <end position="27"/>
    </location>
</feature>
<feature type="topological domain" description="Extracellular" evidence="2">
    <location>
        <begin position="28"/>
        <end position="594"/>
    </location>
</feature>
<feature type="region of interest" description="Disordered" evidence="3">
    <location>
        <begin position="517"/>
        <end position="564"/>
    </location>
</feature>
<feature type="coiled-coil region" evidence="2">
    <location>
        <begin position="512"/>
        <end position="594"/>
    </location>
</feature>
<feature type="compositionally biased region" description="Basic and acidic residues" evidence="3">
    <location>
        <begin position="517"/>
        <end position="558"/>
    </location>
</feature>
<feature type="glycosylation site" description="N-linked (GlcNAc...) asparagine" evidence="2">
    <location>
        <position position="305"/>
    </location>
</feature>
<organism>
    <name type="scientific">Komagataella phaffii (strain ATCC 76273 / CBS 7435 / CECT 11047 / NRRL Y-11430 / Wegner 21-1)</name>
    <name type="common">Yeast</name>
    <name type="synonym">Pichia pastoris</name>
    <dbReference type="NCBI Taxonomy" id="981350"/>
    <lineage>
        <taxon>Eukaryota</taxon>
        <taxon>Fungi</taxon>
        <taxon>Dikarya</taxon>
        <taxon>Ascomycota</taxon>
        <taxon>Saccharomycotina</taxon>
        <taxon>Pichiomycetes</taxon>
        <taxon>Pichiales</taxon>
        <taxon>Pichiaceae</taxon>
        <taxon>Komagataella</taxon>
    </lineage>
</organism>
<reference key="1">
    <citation type="journal article" date="2011" name="J. Biotechnol.">
        <title>High-quality genome sequence of Pichia pastoris CBS7435.</title>
        <authorList>
            <person name="Kueberl A."/>
            <person name="Schneider J."/>
            <person name="Thallinger G.G."/>
            <person name="Anderl I."/>
            <person name="Wibberg D."/>
            <person name="Hajek T."/>
            <person name="Jaenicke S."/>
            <person name="Brinkrolf K."/>
            <person name="Goesmann A."/>
            <person name="Szczepanowski R."/>
            <person name="Puehler A."/>
            <person name="Schwab H."/>
            <person name="Glieder A."/>
            <person name="Pichler H."/>
        </authorList>
    </citation>
    <scope>NUCLEOTIDE SEQUENCE [LARGE SCALE GENOMIC DNA]</scope>
    <source>
        <strain>ATCC 76273 / CBS 7435 / CECT 11047 / NRRL Y-11430 / Wegner 21-1</strain>
    </source>
</reference>
<reference key="2">
    <citation type="journal article" date="2016" name="FEMS Yeast Res.">
        <title>Curation of the genome annotation of Pichia pastoris (Komagataella phaffii) CBS7435 from gene level to protein function.</title>
        <authorList>
            <person name="Valli M."/>
            <person name="Tatto N.E."/>
            <person name="Peymann A."/>
            <person name="Gruber C."/>
            <person name="Landes N."/>
            <person name="Ekker H."/>
            <person name="Thallinger G.G."/>
            <person name="Mattanovich D."/>
            <person name="Gasser B."/>
            <person name="Graf A.B."/>
        </authorList>
    </citation>
    <scope>GENOME REANNOTATION</scope>
    <source>
        <strain>ATCC 76273 / CBS 7435 / CECT 11047 / NRRL Y-11430 / Wegner 21-1</strain>
    </source>
</reference>